<protein>
    <recommendedName>
        <fullName evidence="1">Proline--tRNA ligase</fullName>
        <ecNumber evidence="1">6.1.1.15</ecNumber>
    </recommendedName>
    <alternativeName>
        <fullName evidence="1">Prolyl-tRNA synthetase</fullName>
        <shortName evidence="1">ProRS</shortName>
    </alternativeName>
</protein>
<gene>
    <name evidence="1" type="primary">proS</name>
    <name type="ordered locus">MADE_1005295</name>
</gene>
<proteinExistence type="inferred from homology"/>
<reference key="1">
    <citation type="journal article" date="2008" name="ISME J.">
        <title>Comparative genomics of two ecotypes of the marine planktonic copiotroph Alteromonas macleodii suggests alternative lifestyles associated with different kinds of particulate organic matter.</title>
        <authorList>
            <person name="Ivars-Martinez E."/>
            <person name="Martin-Cuadrado A.-B."/>
            <person name="D'Auria G."/>
            <person name="Mira A."/>
            <person name="Ferriera S."/>
            <person name="Johnson J."/>
            <person name="Friedman R."/>
            <person name="Rodriguez-Valera F."/>
        </authorList>
    </citation>
    <scope>NUCLEOTIDE SEQUENCE [LARGE SCALE GENOMIC DNA]</scope>
    <source>
        <strain>DSM 17117 / CIP 110805 / LMG 28347 / Deep ecotype</strain>
    </source>
</reference>
<accession>B4RV73</accession>
<accession>F2G271</accession>
<keyword id="KW-0030">Aminoacyl-tRNA synthetase</keyword>
<keyword id="KW-0067">ATP-binding</keyword>
<keyword id="KW-0963">Cytoplasm</keyword>
<keyword id="KW-0436">Ligase</keyword>
<keyword id="KW-0547">Nucleotide-binding</keyword>
<keyword id="KW-0648">Protein biosynthesis</keyword>
<comment type="function">
    <text evidence="1">Catalyzes the attachment of proline to tRNA(Pro) in a two-step reaction: proline is first activated by ATP to form Pro-AMP and then transferred to the acceptor end of tRNA(Pro). As ProRS can inadvertently accommodate and process non-cognate amino acids such as alanine and cysteine, to avoid such errors it has two additional distinct editing activities against alanine. One activity is designated as 'pretransfer' editing and involves the tRNA(Pro)-independent hydrolysis of activated Ala-AMP. The other activity is designated 'posttransfer' editing and involves deacylation of mischarged Ala-tRNA(Pro). The misacylated Cys-tRNA(Pro) is not edited by ProRS.</text>
</comment>
<comment type="catalytic activity">
    <reaction evidence="1">
        <text>tRNA(Pro) + L-proline + ATP = L-prolyl-tRNA(Pro) + AMP + diphosphate</text>
        <dbReference type="Rhea" id="RHEA:14305"/>
        <dbReference type="Rhea" id="RHEA-COMP:9700"/>
        <dbReference type="Rhea" id="RHEA-COMP:9702"/>
        <dbReference type="ChEBI" id="CHEBI:30616"/>
        <dbReference type="ChEBI" id="CHEBI:33019"/>
        <dbReference type="ChEBI" id="CHEBI:60039"/>
        <dbReference type="ChEBI" id="CHEBI:78442"/>
        <dbReference type="ChEBI" id="CHEBI:78532"/>
        <dbReference type="ChEBI" id="CHEBI:456215"/>
        <dbReference type="EC" id="6.1.1.15"/>
    </reaction>
</comment>
<comment type="subunit">
    <text evidence="1">Homodimer.</text>
</comment>
<comment type="subcellular location">
    <subcellularLocation>
        <location evidence="1">Cytoplasm</location>
    </subcellularLocation>
</comment>
<comment type="domain">
    <text evidence="1">Consists of three domains: the N-terminal catalytic domain, the editing domain and the C-terminal anticodon-binding domain.</text>
</comment>
<comment type="similarity">
    <text evidence="1">Belongs to the class-II aminoacyl-tRNA synthetase family. ProS type 1 subfamily.</text>
</comment>
<name>SYP_ALTMD</name>
<organism>
    <name type="scientific">Alteromonas mediterranea (strain DSM 17117 / CIP 110805 / LMG 28347 / Deep ecotype)</name>
    <dbReference type="NCBI Taxonomy" id="1774373"/>
    <lineage>
        <taxon>Bacteria</taxon>
        <taxon>Pseudomonadati</taxon>
        <taxon>Pseudomonadota</taxon>
        <taxon>Gammaproteobacteria</taxon>
        <taxon>Alteromonadales</taxon>
        <taxon>Alteromonadaceae</taxon>
        <taxon>Alteromonas/Salinimonas group</taxon>
        <taxon>Alteromonas</taxon>
    </lineage>
</organism>
<feature type="chain" id="PRO_1000199349" description="Proline--tRNA ligase">
    <location>
        <begin position="1"/>
        <end position="572"/>
    </location>
</feature>
<dbReference type="EC" id="6.1.1.15" evidence="1"/>
<dbReference type="EMBL" id="CP001103">
    <property type="protein sequence ID" value="AEA97205.1"/>
    <property type="molecule type" value="Genomic_DNA"/>
</dbReference>
<dbReference type="RefSeq" id="WP_012517559.1">
    <property type="nucleotide sequence ID" value="NC_011138.3"/>
</dbReference>
<dbReference type="SMR" id="B4RV73"/>
<dbReference type="KEGG" id="amc:MADE_1005295"/>
<dbReference type="HOGENOM" id="CLU_016739_0_0_6"/>
<dbReference type="Proteomes" id="UP000001870">
    <property type="component" value="Chromosome"/>
</dbReference>
<dbReference type="GO" id="GO:0005829">
    <property type="term" value="C:cytosol"/>
    <property type="evidence" value="ECO:0007669"/>
    <property type="project" value="TreeGrafter"/>
</dbReference>
<dbReference type="GO" id="GO:0002161">
    <property type="term" value="F:aminoacyl-tRNA deacylase activity"/>
    <property type="evidence" value="ECO:0007669"/>
    <property type="project" value="InterPro"/>
</dbReference>
<dbReference type="GO" id="GO:0005524">
    <property type="term" value="F:ATP binding"/>
    <property type="evidence" value="ECO:0007669"/>
    <property type="project" value="UniProtKB-UniRule"/>
</dbReference>
<dbReference type="GO" id="GO:0004827">
    <property type="term" value="F:proline-tRNA ligase activity"/>
    <property type="evidence" value="ECO:0007669"/>
    <property type="project" value="UniProtKB-UniRule"/>
</dbReference>
<dbReference type="GO" id="GO:0006433">
    <property type="term" value="P:prolyl-tRNA aminoacylation"/>
    <property type="evidence" value="ECO:0007669"/>
    <property type="project" value="UniProtKB-UniRule"/>
</dbReference>
<dbReference type="CDD" id="cd04334">
    <property type="entry name" value="ProRS-INS"/>
    <property type="match status" value="1"/>
</dbReference>
<dbReference type="CDD" id="cd00861">
    <property type="entry name" value="ProRS_anticodon_short"/>
    <property type="match status" value="1"/>
</dbReference>
<dbReference type="CDD" id="cd00779">
    <property type="entry name" value="ProRS_core_prok"/>
    <property type="match status" value="1"/>
</dbReference>
<dbReference type="FunFam" id="3.30.930.10:FF:000012">
    <property type="entry name" value="Proline--tRNA ligase"/>
    <property type="match status" value="1"/>
</dbReference>
<dbReference type="FunFam" id="3.30.930.10:FF:000015">
    <property type="entry name" value="Proline--tRNA ligase"/>
    <property type="match status" value="1"/>
</dbReference>
<dbReference type="FunFam" id="3.40.50.800:FF:000006">
    <property type="entry name" value="Proline--tRNA ligase"/>
    <property type="match status" value="1"/>
</dbReference>
<dbReference type="Gene3D" id="3.40.50.800">
    <property type="entry name" value="Anticodon-binding domain"/>
    <property type="match status" value="1"/>
</dbReference>
<dbReference type="Gene3D" id="3.30.930.10">
    <property type="entry name" value="Bira Bifunctional Protein, Domain 2"/>
    <property type="match status" value="2"/>
</dbReference>
<dbReference type="HAMAP" id="MF_01569">
    <property type="entry name" value="Pro_tRNA_synth_type1"/>
    <property type="match status" value="1"/>
</dbReference>
<dbReference type="InterPro" id="IPR002314">
    <property type="entry name" value="aa-tRNA-synt_IIb"/>
</dbReference>
<dbReference type="InterPro" id="IPR006195">
    <property type="entry name" value="aa-tRNA-synth_II"/>
</dbReference>
<dbReference type="InterPro" id="IPR045864">
    <property type="entry name" value="aa-tRNA-synth_II/BPL/LPL"/>
</dbReference>
<dbReference type="InterPro" id="IPR004154">
    <property type="entry name" value="Anticodon-bd"/>
</dbReference>
<dbReference type="InterPro" id="IPR036621">
    <property type="entry name" value="Anticodon-bd_dom_sf"/>
</dbReference>
<dbReference type="InterPro" id="IPR002316">
    <property type="entry name" value="Pro-tRNA-ligase_IIa"/>
</dbReference>
<dbReference type="InterPro" id="IPR004500">
    <property type="entry name" value="Pro-tRNA-synth_IIa_bac-type"/>
</dbReference>
<dbReference type="InterPro" id="IPR023717">
    <property type="entry name" value="Pro-tRNA-Synthase_IIa_type1"/>
</dbReference>
<dbReference type="InterPro" id="IPR050062">
    <property type="entry name" value="Pro-tRNA_synthetase"/>
</dbReference>
<dbReference type="InterPro" id="IPR044140">
    <property type="entry name" value="ProRS_anticodon_short"/>
</dbReference>
<dbReference type="InterPro" id="IPR033730">
    <property type="entry name" value="ProRS_core_prok"/>
</dbReference>
<dbReference type="InterPro" id="IPR036754">
    <property type="entry name" value="YbaK/aa-tRNA-synt-asso_dom_sf"/>
</dbReference>
<dbReference type="NCBIfam" id="NF006625">
    <property type="entry name" value="PRK09194.1"/>
    <property type="match status" value="1"/>
</dbReference>
<dbReference type="NCBIfam" id="TIGR00409">
    <property type="entry name" value="proS_fam_II"/>
    <property type="match status" value="1"/>
</dbReference>
<dbReference type="PANTHER" id="PTHR42753">
    <property type="entry name" value="MITOCHONDRIAL RIBOSOME PROTEIN L39/PROLYL-TRNA LIGASE FAMILY MEMBER"/>
    <property type="match status" value="1"/>
</dbReference>
<dbReference type="PANTHER" id="PTHR42753:SF2">
    <property type="entry name" value="PROLINE--TRNA LIGASE"/>
    <property type="match status" value="1"/>
</dbReference>
<dbReference type="Pfam" id="PF03129">
    <property type="entry name" value="HGTP_anticodon"/>
    <property type="match status" value="1"/>
</dbReference>
<dbReference type="Pfam" id="PF00587">
    <property type="entry name" value="tRNA-synt_2b"/>
    <property type="match status" value="1"/>
</dbReference>
<dbReference type="PRINTS" id="PR01046">
    <property type="entry name" value="TRNASYNTHPRO"/>
</dbReference>
<dbReference type="SUPFAM" id="SSF52954">
    <property type="entry name" value="Class II aaRS ABD-related"/>
    <property type="match status" value="1"/>
</dbReference>
<dbReference type="SUPFAM" id="SSF55681">
    <property type="entry name" value="Class II aaRS and biotin synthetases"/>
    <property type="match status" value="1"/>
</dbReference>
<dbReference type="SUPFAM" id="SSF55826">
    <property type="entry name" value="YbaK/ProRS associated domain"/>
    <property type="match status" value="1"/>
</dbReference>
<dbReference type="PROSITE" id="PS50862">
    <property type="entry name" value="AA_TRNA_LIGASE_II"/>
    <property type="match status" value="1"/>
</dbReference>
<sequence length="572" mass="62875">MRTSQYLLATQKETPADAEVISHQLMLRAGMIRKLASGLYTWLPSGLRVLNKVANIVREEMNKAGAIEVLMPVVQPADLWEESGRWEEYGPELLRVKDRHQRDFVLGPTHEEVITALVRNEISSYKQLPLNLYQVQTKFRDEVRPRFGIMRGREFTMKDAYSFHLEDSCLEETYQKMYDAYCAIFSRMGLDFRAVIADSGSIGGNHSHEFHVLAESGEDAIAFSSDSDYAANVEMAAAVAPEKAVPSGADVETKDAKGKDFNAILKSVDANATNAVKVVLVKGANELNDKGEDVVCDKWVALVLRADHELNDIKAEKIDGVAIPLVEASFEQAKDVLGVSPFFADATNLPVPAYVDASAAALADFTTGAGAGGKVNVNVNWPDGINTVDIRNVVAGDASPDGQGTLDIKRGIEVGHIFQLGRKYSEAMNCGVLSETGKHQTLTMGCYGIGVSRIVAAAIEQNHDKFGIKWPDPIAPFKIALIPMNMHKSHRIKEAAEALYEELVALGIEVLFDDRKERPGVMFNDMELIGIPHSIVIGERNLDNQQVEYKNRRTGEKQLLDLSAAKEFVAAL</sequence>
<evidence type="ECO:0000255" key="1">
    <source>
        <dbReference type="HAMAP-Rule" id="MF_01569"/>
    </source>
</evidence>